<dbReference type="EMBL" id="AY560875">
    <property type="protein sequence ID" value="AAT44942.1"/>
    <property type="molecule type" value="mRNA"/>
</dbReference>
<dbReference type="EMBL" id="AC004260">
    <property type="protein sequence ID" value="AAC34350.1"/>
    <property type="molecule type" value="Genomic_DNA"/>
</dbReference>
<dbReference type="EMBL" id="CP002684">
    <property type="protein sequence ID" value="AEE35948.1"/>
    <property type="molecule type" value="Genomic_DNA"/>
</dbReference>
<dbReference type="EMBL" id="DQ446437">
    <property type="protein sequence ID" value="ABE65779.1"/>
    <property type="molecule type" value="mRNA"/>
</dbReference>
<dbReference type="EMBL" id="DQ652938">
    <property type="protein sequence ID" value="ABK28471.1"/>
    <property type="status" value="ALT_SEQ"/>
    <property type="molecule type" value="mRNA"/>
</dbReference>
<dbReference type="PIR" id="T00449">
    <property type="entry name" value="T00449"/>
</dbReference>
<dbReference type="RefSeq" id="NP_177844.1">
    <property type="nucleotide sequence ID" value="NM_106369.2"/>
</dbReference>
<dbReference type="SMR" id="O80654"/>
<dbReference type="BioGRID" id="29275">
    <property type="interactions" value="1"/>
</dbReference>
<dbReference type="FunCoup" id="O80654">
    <property type="interactions" value="1"/>
</dbReference>
<dbReference type="IntAct" id="O80654">
    <property type="interactions" value="1"/>
</dbReference>
<dbReference type="STRING" id="3702.O80654"/>
<dbReference type="iPTMnet" id="O80654"/>
<dbReference type="PaxDb" id="3702-AT1G77200.1"/>
<dbReference type="EnsemblPlants" id="AT1G77200.1">
    <property type="protein sequence ID" value="AT1G77200.1"/>
    <property type="gene ID" value="AT1G77200"/>
</dbReference>
<dbReference type="GeneID" id="844056"/>
<dbReference type="Gramene" id="AT1G77200.1">
    <property type="protein sequence ID" value="AT1G77200.1"/>
    <property type="gene ID" value="AT1G77200"/>
</dbReference>
<dbReference type="KEGG" id="ath:AT1G77200"/>
<dbReference type="Araport" id="AT1G77200"/>
<dbReference type="TAIR" id="AT1G77200"/>
<dbReference type="eggNOG" id="ENOG502RNX7">
    <property type="taxonomic scope" value="Eukaryota"/>
</dbReference>
<dbReference type="HOGENOM" id="CLU_063331_3_2_1"/>
<dbReference type="InParanoid" id="O80654"/>
<dbReference type="OMA" id="YYHSDEN"/>
<dbReference type="OrthoDB" id="1111707at2759"/>
<dbReference type="PhylomeDB" id="O80654"/>
<dbReference type="PRO" id="PR:O80654"/>
<dbReference type="Proteomes" id="UP000006548">
    <property type="component" value="Chromosome 1"/>
</dbReference>
<dbReference type="ExpressionAtlas" id="O80654">
    <property type="expression patterns" value="baseline and differential"/>
</dbReference>
<dbReference type="GO" id="GO:0005634">
    <property type="term" value="C:nucleus"/>
    <property type="evidence" value="ECO:0007669"/>
    <property type="project" value="UniProtKB-SubCell"/>
</dbReference>
<dbReference type="GO" id="GO:0003677">
    <property type="term" value="F:DNA binding"/>
    <property type="evidence" value="ECO:0007669"/>
    <property type="project" value="UniProtKB-KW"/>
</dbReference>
<dbReference type="GO" id="GO:0003700">
    <property type="term" value="F:DNA-binding transcription factor activity"/>
    <property type="evidence" value="ECO:0000250"/>
    <property type="project" value="TAIR"/>
</dbReference>
<dbReference type="GO" id="GO:0009873">
    <property type="term" value="P:ethylene-activated signaling pathway"/>
    <property type="evidence" value="ECO:0007669"/>
    <property type="project" value="UniProtKB-KW"/>
</dbReference>
<dbReference type="CDD" id="cd00018">
    <property type="entry name" value="AP2"/>
    <property type="match status" value="1"/>
</dbReference>
<dbReference type="FunFam" id="3.30.730.10:FF:000001">
    <property type="entry name" value="Ethylene-responsive transcription factor 2"/>
    <property type="match status" value="1"/>
</dbReference>
<dbReference type="Gene3D" id="3.30.730.10">
    <property type="entry name" value="AP2/ERF domain"/>
    <property type="match status" value="1"/>
</dbReference>
<dbReference type="InterPro" id="IPR001471">
    <property type="entry name" value="AP2/ERF_dom"/>
</dbReference>
<dbReference type="InterPro" id="IPR036955">
    <property type="entry name" value="AP2/ERF_dom_sf"/>
</dbReference>
<dbReference type="InterPro" id="IPR051032">
    <property type="entry name" value="AP2/ERF_TF_ERF_subfamily"/>
</dbReference>
<dbReference type="InterPro" id="IPR016177">
    <property type="entry name" value="DNA-bd_dom_sf"/>
</dbReference>
<dbReference type="PANTHER" id="PTHR31985:SF271">
    <property type="entry name" value="ETHYLENE-RESPONSIVE TRANSCRIPTION FACTOR ERF037"/>
    <property type="match status" value="1"/>
</dbReference>
<dbReference type="PANTHER" id="PTHR31985">
    <property type="entry name" value="ETHYLENE-RESPONSIVE TRANSCRIPTION FACTOR ERF042-RELATED"/>
    <property type="match status" value="1"/>
</dbReference>
<dbReference type="Pfam" id="PF00847">
    <property type="entry name" value="AP2"/>
    <property type="match status" value="1"/>
</dbReference>
<dbReference type="PRINTS" id="PR00367">
    <property type="entry name" value="ETHRSPELEMNT"/>
</dbReference>
<dbReference type="SMART" id="SM00380">
    <property type="entry name" value="AP2"/>
    <property type="match status" value="1"/>
</dbReference>
<dbReference type="SUPFAM" id="SSF54171">
    <property type="entry name" value="DNA-binding domain"/>
    <property type="match status" value="1"/>
</dbReference>
<dbReference type="PROSITE" id="PS51032">
    <property type="entry name" value="AP2_ERF"/>
    <property type="match status" value="1"/>
</dbReference>
<comment type="function">
    <text evidence="1">Probably acts as a transcriptional activator. Binds to the GCC-box pathogenesis-related promoter element. May be involved in the regulation of gene expression by stress factors and by components of stress signal transduction pathways (By similarity).</text>
</comment>
<comment type="interaction">
    <interactant intactId="EBI-25511744">
        <id>O80654</id>
    </interactant>
    <interactant intactId="EBI-530486">
        <id>P46639</id>
        <label>KNAT1</label>
    </interactant>
    <organismsDiffer>false</organismsDiffer>
    <experiments>4</experiments>
</comment>
<comment type="subcellular location">
    <subcellularLocation>
        <location evidence="4">Nucleus</location>
    </subcellularLocation>
</comment>
<comment type="similarity">
    <text evidence="4">Belongs to the AP2/ERF transcription factor family. ERF subfamily.</text>
</comment>
<comment type="sequence caution" evidence="4">
    <conflict type="erroneous termination">
        <sequence resource="EMBL-CDS" id="ABK28471"/>
    </conflict>
    <text>Extended C-terminus.</text>
</comment>
<sequence length="244" mass="26729">MTESSIISVKQSSPVPEEEDHHHHQQDSHRTNTKKRVRSDPGYRGVRMRTWGKWVSEIREPRKKSRIWLGTFSTPEMAARAHDAAALTIKGTSAVLNFPELATYLPRPASSSPRDVQAAAAVAAAMDFSPSSSSLVVSDPTTVIAPAETQLSSSSYSTCTSSSLSPSSEEAASTAEELSEIVELPSLETSYDESLSEFVYVDSAYPPSSPWYINNCYSFYYHSDENGISMAEPFDSSNFGPLFP</sequence>
<feature type="chain" id="PRO_0000290389" description="Ethylene-responsive transcription factor ERF037">
    <location>
        <begin position="1"/>
        <end position="244"/>
    </location>
</feature>
<feature type="DNA-binding region" description="AP2/ERF" evidence="2">
    <location>
        <begin position="42"/>
        <end position="99"/>
    </location>
</feature>
<feature type="region of interest" description="Disordered" evidence="3">
    <location>
        <begin position="1"/>
        <end position="42"/>
    </location>
</feature>
<feature type="region of interest" description="Disordered" evidence="3">
    <location>
        <begin position="154"/>
        <end position="177"/>
    </location>
</feature>
<feature type="compositionally biased region" description="Polar residues" evidence="3">
    <location>
        <begin position="1"/>
        <end position="14"/>
    </location>
</feature>
<feature type="compositionally biased region" description="Basic and acidic residues" evidence="3">
    <location>
        <begin position="19"/>
        <end position="30"/>
    </location>
</feature>
<feature type="compositionally biased region" description="Low complexity" evidence="3">
    <location>
        <begin position="154"/>
        <end position="176"/>
    </location>
</feature>
<evidence type="ECO:0000250" key="1"/>
<evidence type="ECO:0000255" key="2">
    <source>
        <dbReference type="PROSITE-ProRule" id="PRU00366"/>
    </source>
</evidence>
<evidence type="ECO:0000256" key="3">
    <source>
        <dbReference type="SAM" id="MobiDB-lite"/>
    </source>
</evidence>
<evidence type="ECO:0000305" key="4"/>
<protein>
    <recommendedName>
        <fullName>Ethylene-responsive transcription factor ERF037</fullName>
    </recommendedName>
</protein>
<reference key="1">
    <citation type="submission" date="2004-02" db="EMBL/GenBank/DDBJ databases">
        <title>Molecular cloning, expression, phylogenetic and functional characterization of the Arabidopsis AP2/EREBP transcription factor family.</title>
        <authorList>
            <person name="Pan Y."/>
            <person name="Gong W."/>
            <person name="Liu D."/>
            <person name="Fu Q."/>
            <person name="Mei W.-Q."/>
            <person name="Song W.-Q."/>
            <person name="Ma L.-G."/>
            <person name="Luo J.-C."/>
            <person name="Deng X.-W."/>
            <person name="Zhu Y.-X."/>
        </authorList>
    </citation>
    <scope>NUCLEOTIDE SEQUENCE [MRNA]</scope>
</reference>
<reference key="2">
    <citation type="journal article" date="2000" name="Nature">
        <title>Sequence and analysis of chromosome 1 of the plant Arabidopsis thaliana.</title>
        <authorList>
            <person name="Theologis A."/>
            <person name="Ecker J.R."/>
            <person name="Palm C.J."/>
            <person name="Federspiel N.A."/>
            <person name="Kaul S."/>
            <person name="White O."/>
            <person name="Alonso J."/>
            <person name="Altafi H."/>
            <person name="Araujo R."/>
            <person name="Bowman C.L."/>
            <person name="Brooks S.Y."/>
            <person name="Buehler E."/>
            <person name="Chan A."/>
            <person name="Chao Q."/>
            <person name="Chen H."/>
            <person name="Cheuk R.F."/>
            <person name="Chin C.W."/>
            <person name="Chung M.K."/>
            <person name="Conn L."/>
            <person name="Conway A.B."/>
            <person name="Conway A.R."/>
            <person name="Creasy T.H."/>
            <person name="Dewar K."/>
            <person name="Dunn P."/>
            <person name="Etgu P."/>
            <person name="Feldblyum T.V."/>
            <person name="Feng J.-D."/>
            <person name="Fong B."/>
            <person name="Fujii C.Y."/>
            <person name="Gill J.E."/>
            <person name="Goldsmith A.D."/>
            <person name="Haas B."/>
            <person name="Hansen N.F."/>
            <person name="Hughes B."/>
            <person name="Huizar L."/>
            <person name="Hunter J.L."/>
            <person name="Jenkins J."/>
            <person name="Johnson-Hopson C."/>
            <person name="Khan S."/>
            <person name="Khaykin E."/>
            <person name="Kim C.J."/>
            <person name="Koo H.L."/>
            <person name="Kremenetskaia I."/>
            <person name="Kurtz D.B."/>
            <person name="Kwan A."/>
            <person name="Lam B."/>
            <person name="Langin-Hooper S."/>
            <person name="Lee A."/>
            <person name="Lee J.M."/>
            <person name="Lenz C.A."/>
            <person name="Li J.H."/>
            <person name="Li Y.-P."/>
            <person name="Lin X."/>
            <person name="Liu S.X."/>
            <person name="Liu Z.A."/>
            <person name="Luros J.S."/>
            <person name="Maiti R."/>
            <person name="Marziali A."/>
            <person name="Militscher J."/>
            <person name="Miranda M."/>
            <person name="Nguyen M."/>
            <person name="Nierman W.C."/>
            <person name="Osborne B.I."/>
            <person name="Pai G."/>
            <person name="Peterson J."/>
            <person name="Pham P.K."/>
            <person name="Rizzo M."/>
            <person name="Rooney T."/>
            <person name="Rowley D."/>
            <person name="Sakano H."/>
            <person name="Salzberg S.L."/>
            <person name="Schwartz J.R."/>
            <person name="Shinn P."/>
            <person name="Southwick A.M."/>
            <person name="Sun H."/>
            <person name="Tallon L.J."/>
            <person name="Tambunga G."/>
            <person name="Toriumi M.J."/>
            <person name="Town C.D."/>
            <person name="Utterback T."/>
            <person name="Van Aken S."/>
            <person name="Vaysberg M."/>
            <person name="Vysotskaia V.S."/>
            <person name="Walker M."/>
            <person name="Wu D."/>
            <person name="Yu G."/>
            <person name="Fraser C.M."/>
            <person name="Venter J.C."/>
            <person name="Davis R.W."/>
        </authorList>
    </citation>
    <scope>NUCLEOTIDE SEQUENCE [LARGE SCALE GENOMIC DNA]</scope>
    <source>
        <strain>cv. Columbia</strain>
    </source>
</reference>
<reference key="3">
    <citation type="journal article" date="2017" name="Plant J.">
        <title>Araport11: a complete reannotation of the Arabidopsis thaliana reference genome.</title>
        <authorList>
            <person name="Cheng C.Y."/>
            <person name="Krishnakumar V."/>
            <person name="Chan A.P."/>
            <person name="Thibaud-Nissen F."/>
            <person name="Schobel S."/>
            <person name="Town C.D."/>
        </authorList>
    </citation>
    <scope>GENOME REANNOTATION</scope>
    <source>
        <strain>cv. Columbia</strain>
    </source>
</reference>
<reference key="4">
    <citation type="journal article" date="2006" name="Plant Biotechnol. J.">
        <title>Simultaneous high-throughput recombinational cloning of open reading frames in closed and open configurations.</title>
        <authorList>
            <person name="Underwood B.A."/>
            <person name="Vanderhaeghen R."/>
            <person name="Whitford R."/>
            <person name="Town C.D."/>
            <person name="Hilson P."/>
        </authorList>
    </citation>
    <scope>NUCLEOTIDE SEQUENCE [LARGE SCALE MRNA]</scope>
    <source>
        <strain>cv. Columbia</strain>
    </source>
</reference>
<reference key="5">
    <citation type="journal article" date="2006" name="Plant Physiol.">
        <title>Genome-wide analysis of the ERF gene family in Arabidopsis and rice.</title>
        <authorList>
            <person name="Nakano T."/>
            <person name="Suzuki K."/>
            <person name="Fujimura T."/>
            <person name="Shinshi H."/>
        </authorList>
    </citation>
    <scope>GENE FAMILY</scope>
    <scope>NOMENCLATURE</scope>
</reference>
<accession>O80654</accession>
<accession>A0MEG8</accession>
<keyword id="KW-0010">Activator</keyword>
<keyword id="KW-0238">DNA-binding</keyword>
<keyword id="KW-0936">Ethylene signaling pathway</keyword>
<keyword id="KW-0539">Nucleus</keyword>
<keyword id="KW-1185">Reference proteome</keyword>
<keyword id="KW-0804">Transcription</keyword>
<keyword id="KW-0805">Transcription regulation</keyword>
<name>ERF37_ARATH</name>
<proteinExistence type="evidence at protein level"/>
<gene>
    <name type="primary">ERF037</name>
    <name type="ordered locus">At1g77200</name>
    <name type="ORF">T14N5.6</name>
</gene>
<organism>
    <name type="scientific">Arabidopsis thaliana</name>
    <name type="common">Mouse-ear cress</name>
    <dbReference type="NCBI Taxonomy" id="3702"/>
    <lineage>
        <taxon>Eukaryota</taxon>
        <taxon>Viridiplantae</taxon>
        <taxon>Streptophyta</taxon>
        <taxon>Embryophyta</taxon>
        <taxon>Tracheophyta</taxon>
        <taxon>Spermatophyta</taxon>
        <taxon>Magnoliopsida</taxon>
        <taxon>eudicotyledons</taxon>
        <taxon>Gunneridae</taxon>
        <taxon>Pentapetalae</taxon>
        <taxon>rosids</taxon>
        <taxon>malvids</taxon>
        <taxon>Brassicales</taxon>
        <taxon>Brassicaceae</taxon>
        <taxon>Camelineae</taxon>
        <taxon>Arabidopsis</taxon>
    </lineage>
</organism>